<sequence length="97" mass="10250">MSDWFRQAANGCITLTLHIQPGAKKSEFAGLHGDALKIRLAAPPVDGKANEALIRFIADALGLAKSAVHLKSGQTSRRKVLEILGTSTTTIAGLADR</sequence>
<name>Y3887_DECAR</name>
<feature type="chain" id="PRO_1000056764" description="UPF0235 protein Daro_3887">
    <location>
        <begin position="1"/>
        <end position="97"/>
    </location>
</feature>
<comment type="similarity">
    <text evidence="1">Belongs to the UPF0235 family.</text>
</comment>
<evidence type="ECO:0000255" key="1">
    <source>
        <dbReference type="HAMAP-Rule" id="MF_00634"/>
    </source>
</evidence>
<dbReference type="EMBL" id="CP000089">
    <property type="protein sequence ID" value="AAZ48615.1"/>
    <property type="molecule type" value="Genomic_DNA"/>
</dbReference>
<dbReference type="SMR" id="Q478W6"/>
<dbReference type="STRING" id="159087.Daro_3887"/>
<dbReference type="KEGG" id="dar:Daro_3887"/>
<dbReference type="eggNOG" id="COG1872">
    <property type="taxonomic scope" value="Bacteria"/>
</dbReference>
<dbReference type="HOGENOM" id="CLU_130694_6_0_4"/>
<dbReference type="OrthoDB" id="9800587at2"/>
<dbReference type="GO" id="GO:0005737">
    <property type="term" value="C:cytoplasm"/>
    <property type="evidence" value="ECO:0007669"/>
    <property type="project" value="TreeGrafter"/>
</dbReference>
<dbReference type="Gene3D" id="3.30.1200.10">
    <property type="entry name" value="YggU-like"/>
    <property type="match status" value="1"/>
</dbReference>
<dbReference type="HAMAP" id="MF_00634">
    <property type="entry name" value="UPF0235"/>
    <property type="match status" value="1"/>
</dbReference>
<dbReference type="InterPro" id="IPR003746">
    <property type="entry name" value="DUF167"/>
</dbReference>
<dbReference type="InterPro" id="IPR036591">
    <property type="entry name" value="YggU-like_sf"/>
</dbReference>
<dbReference type="NCBIfam" id="TIGR00251">
    <property type="entry name" value="DUF167 family protein"/>
    <property type="match status" value="1"/>
</dbReference>
<dbReference type="PANTHER" id="PTHR13420">
    <property type="entry name" value="UPF0235 PROTEIN C15ORF40"/>
    <property type="match status" value="1"/>
</dbReference>
<dbReference type="PANTHER" id="PTHR13420:SF7">
    <property type="entry name" value="UPF0235 PROTEIN C15ORF40"/>
    <property type="match status" value="1"/>
</dbReference>
<dbReference type="Pfam" id="PF02594">
    <property type="entry name" value="DUF167"/>
    <property type="match status" value="1"/>
</dbReference>
<dbReference type="SMART" id="SM01152">
    <property type="entry name" value="DUF167"/>
    <property type="match status" value="1"/>
</dbReference>
<dbReference type="SUPFAM" id="SSF69786">
    <property type="entry name" value="YggU-like"/>
    <property type="match status" value="1"/>
</dbReference>
<organism>
    <name type="scientific">Dechloromonas aromatica (strain RCB)</name>
    <dbReference type="NCBI Taxonomy" id="159087"/>
    <lineage>
        <taxon>Bacteria</taxon>
        <taxon>Pseudomonadati</taxon>
        <taxon>Pseudomonadota</taxon>
        <taxon>Betaproteobacteria</taxon>
        <taxon>Rhodocyclales</taxon>
        <taxon>Azonexaceae</taxon>
        <taxon>Dechloromonas</taxon>
    </lineage>
</organism>
<protein>
    <recommendedName>
        <fullName evidence="1">UPF0235 protein Daro_3887</fullName>
    </recommendedName>
</protein>
<reference key="1">
    <citation type="journal article" date="2009" name="BMC Genomics">
        <title>Metabolic analysis of the soil microbe Dechloromonas aromatica str. RCB: indications of a surprisingly complex life-style and cryptic anaerobic pathways for aromatic degradation.</title>
        <authorList>
            <person name="Salinero K.K."/>
            <person name="Keller K."/>
            <person name="Feil W.S."/>
            <person name="Feil H."/>
            <person name="Trong S."/>
            <person name="Di Bartolo G."/>
            <person name="Lapidus A."/>
        </authorList>
    </citation>
    <scope>NUCLEOTIDE SEQUENCE [LARGE SCALE GENOMIC DNA]</scope>
    <source>
        <strain>RCB</strain>
    </source>
</reference>
<accession>Q478W6</accession>
<gene>
    <name type="ordered locus">Daro_3887</name>
</gene>
<proteinExistence type="inferred from homology"/>